<gene>
    <name evidence="1" type="primary">ihfB</name>
    <name evidence="1" type="synonym">himD</name>
    <name type="ordered locus">Sde_2135</name>
</gene>
<accession>Q21IT4</accession>
<name>IHFB_SACD2</name>
<keyword id="KW-0233">DNA recombination</keyword>
<keyword id="KW-0238">DNA-binding</keyword>
<keyword id="KW-1185">Reference proteome</keyword>
<keyword id="KW-0804">Transcription</keyword>
<keyword id="KW-0805">Transcription regulation</keyword>
<keyword id="KW-0810">Translation regulation</keyword>
<dbReference type="EMBL" id="CP000282">
    <property type="protein sequence ID" value="ABD81395.1"/>
    <property type="molecule type" value="Genomic_DNA"/>
</dbReference>
<dbReference type="RefSeq" id="WP_011468613.1">
    <property type="nucleotide sequence ID" value="NC_007912.1"/>
</dbReference>
<dbReference type="SMR" id="Q21IT4"/>
<dbReference type="STRING" id="203122.Sde_2135"/>
<dbReference type="GeneID" id="98613806"/>
<dbReference type="KEGG" id="sde:Sde_2135"/>
<dbReference type="eggNOG" id="COG0776">
    <property type="taxonomic scope" value="Bacteria"/>
</dbReference>
<dbReference type="HOGENOM" id="CLU_105066_2_0_6"/>
<dbReference type="OrthoDB" id="9804203at2"/>
<dbReference type="Proteomes" id="UP000001947">
    <property type="component" value="Chromosome"/>
</dbReference>
<dbReference type="GO" id="GO:0005694">
    <property type="term" value="C:chromosome"/>
    <property type="evidence" value="ECO:0007669"/>
    <property type="project" value="InterPro"/>
</dbReference>
<dbReference type="GO" id="GO:0005829">
    <property type="term" value="C:cytosol"/>
    <property type="evidence" value="ECO:0007669"/>
    <property type="project" value="TreeGrafter"/>
</dbReference>
<dbReference type="GO" id="GO:0003677">
    <property type="term" value="F:DNA binding"/>
    <property type="evidence" value="ECO:0007669"/>
    <property type="project" value="UniProtKB-UniRule"/>
</dbReference>
<dbReference type="GO" id="GO:0030527">
    <property type="term" value="F:structural constituent of chromatin"/>
    <property type="evidence" value="ECO:0007669"/>
    <property type="project" value="InterPro"/>
</dbReference>
<dbReference type="GO" id="GO:0006310">
    <property type="term" value="P:DNA recombination"/>
    <property type="evidence" value="ECO:0007669"/>
    <property type="project" value="UniProtKB-UniRule"/>
</dbReference>
<dbReference type="GO" id="GO:0006355">
    <property type="term" value="P:regulation of DNA-templated transcription"/>
    <property type="evidence" value="ECO:0007669"/>
    <property type="project" value="UniProtKB-UniRule"/>
</dbReference>
<dbReference type="GO" id="GO:0006417">
    <property type="term" value="P:regulation of translation"/>
    <property type="evidence" value="ECO:0007669"/>
    <property type="project" value="UniProtKB-UniRule"/>
</dbReference>
<dbReference type="CDD" id="cd13836">
    <property type="entry name" value="IHF_B"/>
    <property type="match status" value="1"/>
</dbReference>
<dbReference type="FunFam" id="4.10.520.10:FF:000003">
    <property type="entry name" value="Integration host factor subunit beta"/>
    <property type="match status" value="1"/>
</dbReference>
<dbReference type="Gene3D" id="4.10.520.10">
    <property type="entry name" value="IHF-like DNA-binding proteins"/>
    <property type="match status" value="1"/>
</dbReference>
<dbReference type="HAMAP" id="MF_00381">
    <property type="entry name" value="IHF_beta"/>
    <property type="match status" value="1"/>
</dbReference>
<dbReference type="InterPro" id="IPR000119">
    <property type="entry name" value="Hist_DNA-bd"/>
</dbReference>
<dbReference type="InterPro" id="IPR020816">
    <property type="entry name" value="Histone-like_DNA-bd_CS"/>
</dbReference>
<dbReference type="InterPro" id="IPR010992">
    <property type="entry name" value="IHF-like_DNA-bd_dom_sf"/>
</dbReference>
<dbReference type="InterPro" id="IPR005685">
    <property type="entry name" value="IHF_beta"/>
</dbReference>
<dbReference type="NCBIfam" id="TIGR00988">
    <property type="entry name" value="hip"/>
    <property type="match status" value="1"/>
</dbReference>
<dbReference type="NCBIfam" id="NF001222">
    <property type="entry name" value="PRK00199.1"/>
    <property type="match status" value="1"/>
</dbReference>
<dbReference type="PANTHER" id="PTHR33175">
    <property type="entry name" value="DNA-BINDING PROTEIN HU"/>
    <property type="match status" value="1"/>
</dbReference>
<dbReference type="PANTHER" id="PTHR33175:SF5">
    <property type="entry name" value="INTEGRATION HOST FACTOR SUBUNIT BETA"/>
    <property type="match status" value="1"/>
</dbReference>
<dbReference type="Pfam" id="PF00216">
    <property type="entry name" value="Bac_DNA_binding"/>
    <property type="match status" value="1"/>
</dbReference>
<dbReference type="PRINTS" id="PR01727">
    <property type="entry name" value="DNABINDINGHU"/>
</dbReference>
<dbReference type="SMART" id="SM00411">
    <property type="entry name" value="BHL"/>
    <property type="match status" value="1"/>
</dbReference>
<dbReference type="SUPFAM" id="SSF47729">
    <property type="entry name" value="IHF-like DNA-binding proteins"/>
    <property type="match status" value="1"/>
</dbReference>
<dbReference type="PROSITE" id="PS00045">
    <property type="entry name" value="HISTONE_LIKE"/>
    <property type="match status" value="1"/>
</dbReference>
<feature type="chain" id="PRO_1000060649" description="Integration host factor subunit beta">
    <location>
        <begin position="1"/>
        <end position="98"/>
    </location>
</feature>
<feature type="region of interest" description="Disordered" evidence="2">
    <location>
        <begin position="59"/>
        <end position="98"/>
    </location>
</feature>
<feature type="compositionally biased region" description="Basic and acidic residues" evidence="2">
    <location>
        <begin position="82"/>
        <end position="91"/>
    </location>
</feature>
<comment type="function">
    <text evidence="1">This protein is one of the two subunits of integration host factor, a specific DNA-binding protein that functions in genetic recombination as well as in transcriptional and translational control.</text>
</comment>
<comment type="subunit">
    <text evidence="1">Heterodimer of an alpha and a beta chain.</text>
</comment>
<comment type="similarity">
    <text evidence="1">Belongs to the bacterial histone-like protein family.</text>
</comment>
<reference key="1">
    <citation type="journal article" date="2008" name="PLoS Genet.">
        <title>Complete genome sequence of the complex carbohydrate-degrading marine bacterium, Saccharophagus degradans strain 2-40 T.</title>
        <authorList>
            <person name="Weiner R.M."/>
            <person name="Taylor L.E. II"/>
            <person name="Henrissat B."/>
            <person name="Hauser L."/>
            <person name="Land M."/>
            <person name="Coutinho P.M."/>
            <person name="Rancurel C."/>
            <person name="Saunders E.H."/>
            <person name="Longmire A.G."/>
            <person name="Zhang H."/>
            <person name="Bayer E.A."/>
            <person name="Gilbert H.J."/>
            <person name="Larimer F."/>
            <person name="Zhulin I.B."/>
            <person name="Ekborg N.A."/>
            <person name="Lamed R."/>
            <person name="Richardson P.M."/>
            <person name="Borovok I."/>
            <person name="Hutcheson S."/>
        </authorList>
    </citation>
    <scope>NUCLEOTIDE SEQUENCE [LARGE SCALE GENOMIC DNA]</scope>
    <source>
        <strain>2-40 / ATCC 43961 / DSM 17024</strain>
    </source>
</reference>
<sequence>MTKSELIERIAERQDQLSAKDIELAVKLVLEYMSQALSTGERIEIRGFGSFSLHFRAPRTGRNPKTGESVTLPGKYVPHFKPGKEMRDRVNESIQSEG</sequence>
<protein>
    <recommendedName>
        <fullName evidence="1">Integration host factor subunit beta</fullName>
        <shortName evidence="1">IHF-beta</shortName>
    </recommendedName>
</protein>
<organism>
    <name type="scientific">Saccharophagus degradans (strain 2-40 / ATCC 43961 / DSM 17024)</name>
    <dbReference type="NCBI Taxonomy" id="203122"/>
    <lineage>
        <taxon>Bacteria</taxon>
        <taxon>Pseudomonadati</taxon>
        <taxon>Pseudomonadota</taxon>
        <taxon>Gammaproteobacteria</taxon>
        <taxon>Cellvibrionales</taxon>
        <taxon>Cellvibrionaceae</taxon>
        <taxon>Saccharophagus</taxon>
    </lineage>
</organism>
<evidence type="ECO:0000255" key="1">
    <source>
        <dbReference type="HAMAP-Rule" id="MF_00381"/>
    </source>
</evidence>
<evidence type="ECO:0000256" key="2">
    <source>
        <dbReference type="SAM" id="MobiDB-lite"/>
    </source>
</evidence>
<proteinExistence type="inferred from homology"/>